<reference key="1">
    <citation type="submission" date="2008-03" db="EMBL/GenBank/DDBJ databases">
        <title>Complete sequence of Leptothrix cholodnii SP-6.</title>
        <authorList>
            <consortium name="US DOE Joint Genome Institute"/>
            <person name="Copeland A."/>
            <person name="Lucas S."/>
            <person name="Lapidus A."/>
            <person name="Glavina del Rio T."/>
            <person name="Dalin E."/>
            <person name="Tice H."/>
            <person name="Bruce D."/>
            <person name="Goodwin L."/>
            <person name="Pitluck S."/>
            <person name="Chertkov O."/>
            <person name="Brettin T."/>
            <person name="Detter J.C."/>
            <person name="Han C."/>
            <person name="Kuske C.R."/>
            <person name="Schmutz J."/>
            <person name="Larimer F."/>
            <person name="Land M."/>
            <person name="Hauser L."/>
            <person name="Kyrpides N."/>
            <person name="Lykidis A."/>
            <person name="Emerson D."/>
            <person name="Richardson P."/>
        </authorList>
    </citation>
    <scope>NUCLEOTIDE SEQUENCE [LARGE SCALE GENOMIC DNA]</scope>
    <source>
        <strain>ATCC 51168 / LMG 8142 / SP-6</strain>
    </source>
</reference>
<name>RL21_LEPCP</name>
<gene>
    <name evidence="1" type="primary">rplU</name>
    <name type="ordered locus">Lcho_3277</name>
</gene>
<accession>B1Y282</accession>
<evidence type="ECO:0000255" key="1">
    <source>
        <dbReference type="HAMAP-Rule" id="MF_01363"/>
    </source>
</evidence>
<evidence type="ECO:0000305" key="2"/>
<sequence length="103" mass="11313">MYAVIKTGGKQYKVAAGEKIKVEQIAAEVGQEIVIDQVLALGSGADLKIGTPLVEGATVTATVLAQGRHDKVRIFKMRRRKHYQKRQGHRQNFTELQISAVLG</sequence>
<dbReference type="EMBL" id="CP001013">
    <property type="protein sequence ID" value="ACB35535.1"/>
    <property type="molecule type" value="Genomic_DNA"/>
</dbReference>
<dbReference type="RefSeq" id="WP_012348282.1">
    <property type="nucleotide sequence ID" value="NC_010524.1"/>
</dbReference>
<dbReference type="SMR" id="B1Y282"/>
<dbReference type="STRING" id="395495.Lcho_3277"/>
<dbReference type="KEGG" id="lch:Lcho_3277"/>
<dbReference type="eggNOG" id="COG0261">
    <property type="taxonomic scope" value="Bacteria"/>
</dbReference>
<dbReference type="HOGENOM" id="CLU_061463_3_2_4"/>
<dbReference type="OrthoDB" id="9813334at2"/>
<dbReference type="Proteomes" id="UP000001693">
    <property type="component" value="Chromosome"/>
</dbReference>
<dbReference type="GO" id="GO:0005737">
    <property type="term" value="C:cytoplasm"/>
    <property type="evidence" value="ECO:0007669"/>
    <property type="project" value="UniProtKB-ARBA"/>
</dbReference>
<dbReference type="GO" id="GO:1990904">
    <property type="term" value="C:ribonucleoprotein complex"/>
    <property type="evidence" value="ECO:0007669"/>
    <property type="project" value="UniProtKB-KW"/>
</dbReference>
<dbReference type="GO" id="GO:0005840">
    <property type="term" value="C:ribosome"/>
    <property type="evidence" value="ECO:0007669"/>
    <property type="project" value="UniProtKB-KW"/>
</dbReference>
<dbReference type="GO" id="GO:0019843">
    <property type="term" value="F:rRNA binding"/>
    <property type="evidence" value="ECO:0007669"/>
    <property type="project" value="UniProtKB-UniRule"/>
</dbReference>
<dbReference type="GO" id="GO:0003735">
    <property type="term" value="F:structural constituent of ribosome"/>
    <property type="evidence" value="ECO:0007669"/>
    <property type="project" value="InterPro"/>
</dbReference>
<dbReference type="GO" id="GO:0006412">
    <property type="term" value="P:translation"/>
    <property type="evidence" value="ECO:0007669"/>
    <property type="project" value="UniProtKB-UniRule"/>
</dbReference>
<dbReference type="HAMAP" id="MF_01363">
    <property type="entry name" value="Ribosomal_bL21"/>
    <property type="match status" value="1"/>
</dbReference>
<dbReference type="InterPro" id="IPR028909">
    <property type="entry name" value="bL21-like"/>
</dbReference>
<dbReference type="InterPro" id="IPR036164">
    <property type="entry name" value="bL21-like_sf"/>
</dbReference>
<dbReference type="InterPro" id="IPR001787">
    <property type="entry name" value="Ribosomal_bL21"/>
</dbReference>
<dbReference type="InterPro" id="IPR018258">
    <property type="entry name" value="Ribosomal_bL21_CS"/>
</dbReference>
<dbReference type="NCBIfam" id="TIGR00061">
    <property type="entry name" value="L21"/>
    <property type="match status" value="1"/>
</dbReference>
<dbReference type="PANTHER" id="PTHR21349">
    <property type="entry name" value="50S RIBOSOMAL PROTEIN L21"/>
    <property type="match status" value="1"/>
</dbReference>
<dbReference type="PANTHER" id="PTHR21349:SF0">
    <property type="entry name" value="LARGE RIBOSOMAL SUBUNIT PROTEIN BL21M"/>
    <property type="match status" value="1"/>
</dbReference>
<dbReference type="Pfam" id="PF00829">
    <property type="entry name" value="Ribosomal_L21p"/>
    <property type="match status" value="1"/>
</dbReference>
<dbReference type="SUPFAM" id="SSF141091">
    <property type="entry name" value="L21p-like"/>
    <property type="match status" value="1"/>
</dbReference>
<dbReference type="PROSITE" id="PS01169">
    <property type="entry name" value="RIBOSOMAL_L21"/>
    <property type="match status" value="1"/>
</dbReference>
<comment type="function">
    <text evidence="1">This protein binds to 23S rRNA in the presence of protein L20.</text>
</comment>
<comment type="subunit">
    <text evidence="1">Part of the 50S ribosomal subunit. Contacts protein L20.</text>
</comment>
<comment type="similarity">
    <text evidence="1">Belongs to the bacterial ribosomal protein bL21 family.</text>
</comment>
<proteinExistence type="inferred from homology"/>
<organism>
    <name type="scientific">Leptothrix cholodnii (strain ATCC 51168 / LMG 8142 / SP-6)</name>
    <name type="common">Leptothrix discophora (strain SP-6)</name>
    <dbReference type="NCBI Taxonomy" id="395495"/>
    <lineage>
        <taxon>Bacteria</taxon>
        <taxon>Pseudomonadati</taxon>
        <taxon>Pseudomonadota</taxon>
        <taxon>Betaproteobacteria</taxon>
        <taxon>Burkholderiales</taxon>
        <taxon>Sphaerotilaceae</taxon>
        <taxon>Leptothrix</taxon>
    </lineage>
</organism>
<feature type="chain" id="PRO_1000143817" description="Large ribosomal subunit protein bL21">
    <location>
        <begin position="1"/>
        <end position="103"/>
    </location>
</feature>
<protein>
    <recommendedName>
        <fullName evidence="1">Large ribosomal subunit protein bL21</fullName>
    </recommendedName>
    <alternativeName>
        <fullName evidence="2">50S ribosomal protein L21</fullName>
    </alternativeName>
</protein>
<keyword id="KW-1185">Reference proteome</keyword>
<keyword id="KW-0687">Ribonucleoprotein</keyword>
<keyword id="KW-0689">Ribosomal protein</keyword>
<keyword id="KW-0694">RNA-binding</keyword>
<keyword id="KW-0699">rRNA-binding</keyword>